<name>COAA_MYCLE</name>
<organism>
    <name type="scientific">Mycobacterium leprae (strain TN)</name>
    <dbReference type="NCBI Taxonomy" id="272631"/>
    <lineage>
        <taxon>Bacteria</taxon>
        <taxon>Bacillati</taxon>
        <taxon>Actinomycetota</taxon>
        <taxon>Actinomycetes</taxon>
        <taxon>Mycobacteriales</taxon>
        <taxon>Mycobacteriaceae</taxon>
        <taxon>Mycobacterium</taxon>
    </lineage>
</organism>
<keyword id="KW-0067">ATP-binding</keyword>
<keyword id="KW-0173">Coenzyme A biosynthesis</keyword>
<keyword id="KW-0963">Cytoplasm</keyword>
<keyword id="KW-0418">Kinase</keyword>
<keyword id="KW-0547">Nucleotide-binding</keyword>
<keyword id="KW-1185">Reference proteome</keyword>
<keyword id="KW-0808">Transferase</keyword>
<proteinExistence type="inferred from homology"/>
<accession>Q9X795</accession>
<sequence>MPRLSEPSPYVEFDRKQWRALRMSTPLALTEEELIGLRGLGEQIDLLEVEEVYLPLARLIHLQVAARQRLFAATAEFLGEPQQNPGRPVPFIIGVAGSVAVGKSTTARVLQALLARWDHHTRVDLVTTDGFLYPNAELGRRNLMHRKGFPESYNRRALMRFVTSVKSGADYACAPVYSHLRYDTIPGAKHVVRHPDILILEGLNVLQTGPTLMVSDLFDFSLYVDARIQDIEQWYVSRFLAMRGTAFADPESHFHHYSALTDSKAIIAAREIWRSINRPNLVENILPTRPRATLVLRKDADHSINRLRLRKL</sequence>
<gene>
    <name type="primary">coaA</name>
    <name type="ordered locus">ML1954</name>
    <name type="ORF">MLCB1222.23</name>
</gene>
<feature type="chain" id="PRO_0000194438" description="Pantothenate kinase">
    <location>
        <begin position="1"/>
        <end position="312"/>
    </location>
</feature>
<feature type="binding site" evidence="2">
    <location>
        <begin position="97"/>
        <end position="104"/>
    </location>
    <ligand>
        <name>ATP</name>
        <dbReference type="ChEBI" id="CHEBI:30616"/>
    </ligand>
</feature>
<dbReference type="EC" id="2.7.1.33"/>
<dbReference type="EMBL" id="AL049491">
    <property type="protein sequence ID" value="CAB39829.1"/>
    <property type="molecule type" value="Genomic_DNA"/>
</dbReference>
<dbReference type="EMBL" id="AL583923">
    <property type="protein sequence ID" value="CAC30909.1"/>
    <property type="molecule type" value="Genomic_DNA"/>
</dbReference>
<dbReference type="PIR" id="E87153">
    <property type="entry name" value="E87153"/>
</dbReference>
<dbReference type="RefSeq" id="NP_302319.1">
    <property type="nucleotide sequence ID" value="NC_002677.1"/>
</dbReference>
<dbReference type="RefSeq" id="WP_010908640.1">
    <property type="nucleotide sequence ID" value="NC_002677.1"/>
</dbReference>
<dbReference type="SMR" id="Q9X795"/>
<dbReference type="STRING" id="272631.gene:17575806"/>
<dbReference type="KEGG" id="mle:ML1954"/>
<dbReference type="PATRIC" id="fig|272631.5.peg.3703"/>
<dbReference type="Leproma" id="ML1954"/>
<dbReference type="eggNOG" id="COG1072">
    <property type="taxonomic scope" value="Bacteria"/>
</dbReference>
<dbReference type="HOGENOM" id="CLU_053818_1_1_11"/>
<dbReference type="OrthoDB" id="1550976at2"/>
<dbReference type="UniPathway" id="UPA00241">
    <property type="reaction ID" value="UER00352"/>
</dbReference>
<dbReference type="Proteomes" id="UP000000806">
    <property type="component" value="Chromosome"/>
</dbReference>
<dbReference type="GO" id="GO:0005737">
    <property type="term" value="C:cytoplasm"/>
    <property type="evidence" value="ECO:0007669"/>
    <property type="project" value="UniProtKB-SubCell"/>
</dbReference>
<dbReference type="GO" id="GO:0005524">
    <property type="term" value="F:ATP binding"/>
    <property type="evidence" value="ECO:0007669"/>
    <property type="project" value="UniProtKB-UniRule"/>
</dbReference>
<dbReference type="GO" id="GO:0004594">
    <property type="term" value="F:pantothenate kinase activity"/>
    <property type="evidence" value="ECO:0007669"/>
    <property type="project" value="UniProtKB-UniRule"/>
</dbReference>
<dbReference type="GO" id="GO:0015937">
    <property type="term" value="P:coenzyme A biosynthetic process"/>
    <property type="evidence" value="ECO:0007669"/>
    <property type="project" value="UniProtKB-UniRule"/>
</dbReference>
<dbReference type="CDD" id="cd02025">
    <property type="entry name" value="PanK"/>
    <property type="match status" value="1"/>
</dbReference>
<dbReference type="FunFam" id="3.40.50.300:FF:000242">
    <property type="entry name" value="Pantothenate kinase"/>
    <property type="match status" value="1"/>
</dbReference>
<dbReference type="Gene3D" id="3.40.50.300">
    <property type="entry name" value="P-loop containing nucleotide triphosphate hydrolases"/>
    <property type="match status" value="1"/>
</dbReference>
<dbReference type="HAMAP" id="MF_00215">
    <property type="entry name" value="Pantothen_kinase_1"/>
    <property type="match status" value="1"/>
</dbReference>
<dbReference type="InterPro" id="IPR027417">
    <property type="entry name" value="P-loop_NTPase"/>
</dbReference>
<dbReference type="InterPro" id="IPR004566">
    <property type="entry name" value="PanK"/>
</dbReference>
<dbReference type="InterPro" id="IPR006083">
    <property type="entry name" value="PRK/URK"/>
</dbReference>
<dbReference type="NCBIfam" id="TIGR00554">
    <property type="entry name" value="panK_bact"/>
    <property type="match status" value="1"/>
</dbReference>
<dbReference type="PANTHER" id="PTHR10285">
    <property type="entry name" value="URIDINE KINASE"/>
    <property type="match status" value="1"/>
</dbReference>
<dbReference type="Pfam" id="PF00485">
    <property type="entry name" value="PRK"/>
    <property type="match status" value="1"/>
</dbReference>
<dbReference type="PIRSF" id="PIRSF000545">
    <property type="entry name" value="Pantothenate_kin"/>
    <property type="match status" value="1"/>
</dbReference>
<dbReference type="SUPFAM" id="SSF52540">
    <property type="entry name" value="P-loop containing nucleoside triphosphate hydrolases"/>
    <property type="match status" value="1"/>
</dbReference>
<protein>
    <recommendedName>
        <fullName>Pantothenate kinase</fullName>
        <ecNumber>2.7.1.33</ecNumber>
    </recommendedName>
    <alternativeName>
        <fullName>Pantothenic acid kinase</fullName>
    </alternativeName>
</protein>
<reference key="1">
    <citation type="journal article" date="2001" name="Nature">
        <title>Massive gene decay in the leprosy bacillus.</title>
        <authorList>
            <person name="Cole S.T."/>
            <person name="Eiglmeier K."/>
            <person name="Parkhill J."/>
            <person name="James K.D."/>
            <person name="Thomson N.R."/>
            <person name="Wheeler P.R."/>
            <person name="Honore N."/>
            <person name="Garnier T."/>
            <person name="Churcher C.M."/>
            <person name="Harris D.E."/>
            <person name="Mungall K.L."/>
            <person name="Basham D."/>
            <person name="Brown D."/>
            <person name="Chillingworth T."/>
            <person name="Connor R."/>
            <person name="Davies R.M."/>
            <person name="Devlin K."/>
            <person name="Duthoy S."/>
            <person name="Feltwell T."/>
            <person name="Fraser A."/>
            <person name="Hamlin N."/>
            <person name="Holroyd S."/>
            <person name="Hornsby T."/>
            <person name="Jagels K."/>
            <person name="Lacroix C."/>
            <person name="Maclean J."/>
            <person name="Moule S."/>
            <person name="Murphy L.D."/>
            <person name="Oliver K."/>
            <person name="Quail M.A."/>
            <person name="Rajandream M.A."/>
            <person name="Rutherford K.M."/>
            <person name="Rutter S."/>
            <person name="Seeger K."/>
            <person name="Simon S."/>
            <person name="Simmonds M."/>
            <person name="Skelton J."/>
            <person name="Squares R."/>
            <person name="Squares S."/>
            <person name="Stevens K."/>
            <person name="Taylor K."/>
            <person name="Whitehead S."/>
            <person name="Woodward J.R."/>
            <person name="Barrell B.G."/>
        </authorList>
    </citation>
    <scope>NUCLEOTIDE SEQUENCE [LARGE SCALE GENOMIC DNA]</scope>
    <source>
        <strain>TN</strain>
    </source>
</reference>
<comment type="catalytic activity">
    <reaction>
        <text>(R)-pantothenate + ATP = (R)-4'-phosphopantothenate + ADP + H(+)</text>
        <dbReference type="Rhea" id="RHEA:16373"/>
        <dbReference type="ChEBI" id="CHEBI:10986"/>
        <dbReference type="ChEBI" id="CHEBI:15378"/>
        <dbReference type="ChEBI" id="CHEBI:29032"/>
        <dbReference type="ChEBI" id="CHEBI:30616"/>
        <dbReference type="ChEBI" id="CHEBI:456216"/>
        <dbReference type="EC" id="2.7.1.33"/>
    </reaction>
</comment>
<comment type="pathway">
    <text>Cofactor biosynthesis; coenzyme A biosynthesis; CoA from (R)-pantothenate: step 1/5.</text>
</comment>
<comment type="subcellular location">
    <subcellularLocation>
        <location evidence="1">Cytoplasm</location>
    </subcellularLocation>
</comment>
<comment type="similarity">
    <text evidence="3">Belongs to the prokaryotic pantothenate kinase family.</text>
</comment>
<evidence type="ECO:0000250" key="1"/>
<evidence type="ECO:0000255" key="2"/>
<evidence type="ECO:0000305" key="3"/>